<proteinExistence type="evidence at transcript level"/>
<gene>
    <name type="primary">CHTB1</name>
</gene>
<accession>P52403</accession>
<organism>
    <name type="scientific">Solanum tuberosum</name>
    <name type="common">Potato</name>
    <dbReference type="NCBI Taxonomy" id="4113"/>
    <lineage>
        <taxon>Eukaryota</taxon>
        <taxon>Viridiplantae</taxon>
        <taxon>Streptophyta</taxon>
        <taxon>Embryophyta</taxon>
        <taxon>Tracheophyta</taxon>
        <taxon>Spermatophyta</taxon>
        <taxon>Magnoliopsida</taxon>
        <taxon>eudicotyledons</taxon>
        <taxon>Gunneridae</taxon>
        <taxon>Pentapetalae</taxon>
        <taxon>asterids</taxon>
        <taxon>lamiids</taxon>
        <taxon>Solanales</taxon>
        <taxon>Solanaceae</taxon>
        <taxon>Solanoideae</taxon>
        <taxon>Solaneae</taxon>
        <taxon>Solanum</taxon>
    </lineage>
</organism>
<name>CHI1_SOLTU</name>
<reference key="1">
    <citation type="journal article" date="1994" name="Plant Mol. Biol.">
        <title>Primary structure and expression of mRNAs encoding basic chitinase and 1,3-beta-glucanase in potato.</title>
        <authorList>
            <person name="Beerhues L."/>
            <person name="Kombrink E."/>
        </authorList>
    </citation>
    <scope>NUCLEOTIDE SEQUENCE [MRNA]</scope>
    <source>
        <strain>cv. Datura</strain>
        <tissue>Leaf</tissue>
    </source>
</reference>
<feature type="signal peptide" evidence="3">
    <location>
        <begin position="1" status="less than"/>
        <end position="18"/>
    </location>
</feature>
<feature type="chain" id="PRO_0000005320" description="Endochitinase 1">
    <location>
        <begin position="19"/>
        <end position="311"/>
    </location>
</feature>
<feature type="propeptide" id="PRO_0000005321" description="Removed in mature form, vacuolar targeting" evidence="3">
    <location>
        <begin position="312"/>
        <end position="318"/>
    </location>
</feature>
<feature type="domain" description="Chitin-binding type-1" evidence="4">
    <location>
        <begin position="19"/>
        <end position="60"/>
    </location>
</feature>
<feature type="active site" description="Proton donor" evidence="2">
    <location>
        <position position="134"/>
    </location>
</feature>
<feature type="disulfide bond" evidence="4">
    <location>
        <begin position="21"/>
        <end position="36"/>
    </location>
</feature>
<feature type="disulfide bond" evidence="4">
    <location>
        <begin position="30"/>
        <end position="42"/>
    </location>
</feature>
<feature type="disulfide bond" evidence="4">
    <location>
        <begin position="35"/>
        <end position="49"/>
    </location>
</feature>
<feature type="disulfide bond" evidence="4">
    <location>
        <begin position="54"/>
        <end position="58"/>
    </location>
</feature>
<feature type="disulfide bond" evidence="4">
    <location>
        <begin position="89"/>
        <end position="152"/>
    </location>
</feature>
<feature type="disulfide bond" evidence="4">
    <location>
        <begin position="164"/>
        <end position="172"/>
    </location>
</feature>
<feature type="disulfide bond" evidence="4">
    <location>
        <begin position="271"/>
        <end position="303"/>
    </location>
</feature>
<feature type="non-terminal residue">
    <location>
        <position position="1"/>
    </location>
</feature>
<comment type="function">
    <text>Defense against chitin-containing fungal pathogens.</text>
</comment>
<comment type="catalytic activity">
    <reaction>
        <text>Random endo-hydrolysis of N-acetyl-beta-D-glucosaminide (1-&gt;4)-beta-linkages in chitin and chitodextrins.</text>
        <dbReference type="EC" id="3.2.1.14"/>
    </reaction>
</comment>
<comment type="subcellular location">
    <subcellularLocation>
        <location evidence="1">Vacuole</location>
    </subcellularLocation>
    <text evidence="1">Vacuolar and protoplast.</text>
</comment>
<comment type="developmental stage">
    <text>Highest levels in younger leaves or stems segments and in older ones. Leaves and stems of intermediate age show a decreased expression. Appreciable amounts are also found in old root segments, and carpels.</text>
</comment>
<comment type="induction">
    <text>In response to infection, elicitor, ethylene, wounding.</text>
</comment>
<comment type="similarity">
    <text evidence="5">Belongs to the glycosyl hydrolase 19 family. Chitinase class I subfamily.</text>
</comment>
<protein>
    <recommendedName>
        <fullName>Endochitinase 1</fullName>
        <ecNumber>3.2.1.14</ecNumber>
    </recommendedName>
</protein>
<sequence length="318" mass="33814">EFTTLFLLFSVLLLSASAEQCGSQAGGALCASGLCCSKFGWCGDTNDYCGPGNCQSQCPGGPGPSGDLGGVISNSMFDQMLNHRNDNACQGKGNFYSYNAFISAAGSFPGFGTTGDITARKREIAAFFAQTSHETTGGWPTAPDGPYAWGYCFLREQGSPGDYCTPSSQWPCAPGRKYFGRGPIQISHNYNYGPCGRAIGVDLLNNPDLVATDSVISFKSAIWFWMTPQSPKPSCHDVITGRWQPSGVDQAANRVPGFGVITNIINGGLECGHGSDSRVQDRIGFYRRYCGILGVSPGDNLDCGNQRSFGNGLLVDTM</sequence>
<evidence type="ECO:0000250" key="1"/>
<evidence type="ECO:0000250" key="2">
    <source>
        <dbReference type="UniProtKB" id="P29022"/>
    </source>
</evidence>
<evidence type="ECO:0000255" key="3"/>
<evidence type="ECO:0000255" key="4">
    <source>
        <dbReference type="PROSITE-ProRule" id="PRU00261"/>
    </source>
</evidence>
<evidence type="ECO:0000305" key="5"/>
<keyword id="KW-0119">Carbohydrate metabolism</keyword>
<keyword id="KW-0146">Chitin degradation</keyword>
<keyword id="KW-0147">Chitin-binding</keyword>
<keyword id="KW-1015">Disulfide bond</keyword>
<keyword id="KW-0326">Glycosidase</keyword>
<keyword id="KW-0378">Hydrolase</keyword>
<keyword id="KW-0611">Plant defense</keyword>
<keyword id="KW-0624">Polysaccharide degradation</keyword>
<keyword id="KW-1185">Reference proteome</keyword>
<keyword id="KW-0732">Signal</keyword>
<keyword id="KW-0926">Vacuole</keyword>
<dbReference type="EC" id="3.2.1.14"/>
<dbReference type="EMBL" id="U02605">
    <property type="protein sequence ID" value="AAA18332.1"/>
    <property type="molecule type" value="mRNA"/>
</dbReference>
<dbReference type="PIR" id="S65019">
    <property type="entry name" value="S65019"/>
</dbReference>
<dbReference type="SMR" id="P52403"/>
<dbReference type="FunCoup" id="P52403">
    <property type="interactions" value="211"/>
</dbReference>
<dbReference type="STRING" id="4113.P52403"/>
<dbReference type="CAZy" id="CBM18">
    <property type="family name" value="Carbohydrate-Binding Module Family 18"/>
</dbReference>
<dbReference type="CAZy" id="GH19">
    <property type="family name" value="Glycoside Hydrolase Family 19"/>
</dbReference>
<dbReference type="InParanoid" id="P52403"/>
<dbReference type="Proteomes" id="UP000011115">
    <property type="component" value="Unassembled WGS sequence"/>
</dbReference>
<dbReference type="ExpressionAtlas" id="P52403">
    <property type="expression patterns" value="baseline"/>
</dbReference>
<dbReference type="GO" id="GO:0005773">
    <property type="term" value="C:vacuole"/>
    <property type="evidence" value="ECO:0007669"/>
    <property type="project" value="UniProtKB-SubCell"/>
</dbReference>
<dbReference type="GO" id="GO:0008061">
    <property type="term" value="F:chitin binding"/>
    <property type="evidence" value="ECO:0007669"/>
    <property type="project" value="UniProtKB-KW"/>
</dbReference>
<dbReference type="GO" id="GO:0004568">
    <property type="term" value="F:chitinase activity"/>
    <property type="evidence" value="ECO:0000318"/>
    <property type="project" value="GO_Central"/>
</dbReference>
<dbReference type="GO" id="GO:0008843">
    <property type="term" value="F:endochitinase activity"/>
    <property type="evidence" value="ECO:0007669"/>
    <property type="project" value="UniProtKB-EC"/>
</dbReference>
<dbReference type="GO" id="GO:0016998">
    <property type="term" value="P:cell wall macromolecule catabolic process"/>
    <property type="evidence" value="ECO:0007669"/>
    <property type="project" value="InterPro"/>
</dbReference>
<dbReference type="GO" id="GO:0006032">
    <property type="term" value="P:chitin catabolic process"/>
    <property type="evidence" value="ECO:0007669"/>
    <property type="project" value="UniProtKB-KW"/>
</dbReference>
<dbReference type="GO" id="GO:0006952">
    <property type="term" value="P:defense response"/>
    <property type="evidence" value="ECO:0007669"/>
    <property type="project" value="UniProtKB-KW"/>
</dbReference>
<dbReference type="GO" id="GO:0000272">
    <property type="term" value="P:polysaccharide catabolic process"/>
    <property type="evidence" value="ECO:0007669"/>
    <property type="project" value="UniProtKB-KW"/>
</dbReference>
<dbReference type="CDD" id="cd00325">
    <property type="entry name" value="chitinase_GH19"/>
    <property type="match status" value="1"/>
</dbReference>
<dbReference type="CDD" id="cd06921">
    <property type="entry name" value="ChtBD1_GH19_hevein"/>
    <property type="match status" value="1"/>
</dbReference>
<dbReference type="FunFam" id="3.30.60.10:FF:000001">
    <property type="entry name" value="Basic endochitinase"/>
    <property type="match status" value="1"/>
</dbReference>
<dbReference type="FunFam" id="3.30.20.10:FF:000001">
    <property type="entry name" value="Endochitinase (Chitinase)"/>
    <property type="match status" value="1"/>
</dbReference>
<dbReference type="Gene3D" id="1.10.530.10">
    <property type="match status" value="1"/>
</dbReference>
<dbReference type="Gene3D" id="3.30.20.10">
    <property type="entry name" value="Endochitinase, domain 2"/>
    <property type="match status" value="1"/>
</dbReference>
<dbReference type="Gene3D" id="3.30.60.10">
    <property type="entry name" value="Endochitinase-like"/>
    <property type="match status" value="1"/>
</dbReference>
<dbReference type="InterPro" id="IPR001002">
    <property type="entry name" value="Chitin-bd_1"/>
</dbReference>
<dbReference type="InterPro" id="IPR018371">
    <property type="entry name" value="Chitin-binding_1_CS"/>
</dbReference>
<dbReference type="InterPro" id="IPR036861">
    <property type="entry name" value="Endochitinase-like_sf"/>
</dbReference>
<dbReference type="InterPro" id="IPR016283">
    <property type="entry name" value="Glyco_hydro_19"/>
</dbReference>
<dbReference type="InterPro" id="IPR000726">
    <property type="entry name" value="Glyco_hydro_19_cat"/>
</dbReference>
<dbReference type="InterPro" id="IPR023346">
    <property type="entry name" value="Lysozyme-like_dom_sf"/>
</dbReference>
<dbReference type="PANTHER" id="PTHR22595:SF149">
    <property type="entry name" value="BASIC 30 KDA ENDOCHITINASE"/>
    <property type="match status" value="1"/>
</dbReference>
<dbReference type="PANTHER" id="PTHR22595">
    <property type="entry name" value="CHITINASE-RELATED"/>
    <property type="match status" value="1"/>
</dbReference>
<dbReference type="Pfam" id="PF00187">
    <property type="entry name" value="Chitin_bind_1"/>
    <property type="match status" value="1"/>
</dbReference>
<dbReference type="Pfam" id="PF00182">
    <property type="entry name" value="Glyco_hydro_19"/>
    <property type="match status" value="1"/>
</dbReference>
<dbReference type="PIRSF" id="PIRSF001060">
    <property type="entry name" value="Endochitinase"/>
    <property type="match status" value="1"/>
</dbReference>
<dbReference type="PRINTS" id="PR00451">
    <property type="entry name" value="CHITINBINDNG"/>
</dbReference>
<dbReference type="SMART" id="SM00270">
    <property type="entry name" value="ChtBD1"/>
    <property type="match status" value="1"/>
</dbReference>
<dbReference type="SUPFAM" id="SSF53955">
    <property type="entry name" value="Lysozyme-like"/>
    <property type="match status" value="1"/>
</dbReference>
<dbReference type="SUPFAM" id="SSF57016">
    <property type="entry name" value="Plant lectins/antimicrobial peptides"/>
    <property type="match status" value="1"/>
</dbReference>
<dbReference type="PROSITE" id="PS00026">
    <property type="entry name" value="CHIT_BIND_I_1"/>
    <property type="match status" value="1"/>
</dbReference>
<dbReference type="PROSITE" id="PS50941">
    <property type="entry name" value="CHIT_BIND_I_2"/>
    <property type="match status" value="1"/>
</dbReference>
<dbReference type="PROSITE" id="PS00773">
    <property type="entry name" value="CHITINASE_19_1"/>
    <property type="match status" value="1"/>
</dbReference>
<dbReference type="PROSITE" id="PS00774">
    <property type="entry name" value="CHITINASE_19_2"/>
    <property type="match status" value="1"/>
</dbReference>